<comment type="function">
    <text evidence="1">Responsible for the release of ribosomes from messenger RNA at the termination of protein biosynthesis. May increase the efficiency of translation by recycling ribosomes from one round of translation to another.</text>
</comment>
<comment type="subcellular location">
    <subcellularLocation>
        <location evidence="1">Cytoplasm</location>
    </subcellularLocation>
</comment>
<comment type="similarity">
    <text evidence="1">Belongs to the RRF family.</text>
</comment>
<protein>
    <recommendedName>
        <fullName evidence="1">Ribosome-recycling factor</fullName>
        <shortName evidence="1">RRF</shortName>
    </recommendedName>
    <alternativeName>
        <fullName evidence="1">Ribosome-releasing factor</fullName>
    </alternativeName>
</protein>
<sequence>MSVADIRNSAESRMSKSLDTLKVNLSKIRTGRAHAGILDHVQVEYYGSPVPVGQVANLNLVDARTISVQPYEKHMAGPIERAIRDSDLGLNPVSLGDTIRVPMPALTEERRRDLTKVVRSEGEDAKVAVRNLRREANEALKKLVKDKIISEDDERRGQDEVQKLTDRAVADIDKMVTQKEAEIMTV</sequence>
<keyword id="KW-0963">Cytoplasm</keyword>
<keyword id="KW-0648">Protein biosynthesis</keyword>
<keyword id="KW-1185">Reference proteome</keyword>
<proteinExistence type="inferred from homology"/>
<organism>
    <name type="scientific">Bordetella avium (strain 197N)</name>
    <dbReference type="NCBI Taxonomy" id="360910"/>
    <lineage>
        <taxon>Bacteria</taxon>
        <taxon>Pseudomonadati</taxon>
        <taxon>Pseudomonadota</taxon>
        <taxon>Betaproteobacteria</taxon>
        <taxon>Burkholderiales</taxon>
        <taxon>Alcaligenaceae</taxon>
        <taxon>Bordetella</taxon>
    </lineage>
</organism>
<evidence type="ECO:0000255" key="1">
    <source>
        <dbReference type="HAMAP-Rule" id="MF_00040"/>
    </source>
</evidence>
<name>RRF_BORA1</name>
<accession>Q2L159</accession>
<reference key="1">
    <citation type="journal article" date="2006" name="J. Bacteriol.">
        <title>Comparison of the genome sequence of the poultry pathogen Bordetella avium with those of B. bronchiseptica, B. pertussis, and B. parapertussis reveals extensive diversity in surface structures associated with host interaction.</title>
        <authorList>
            <person name="Sebaihia M."/>
            <person name="Preston A."/>
            <person name="Maskell D.J."/>
            <person name="Kuzmiak H."/>
            <person name="Connell T.D."/>
            <person name="King N.D."/>
            <person name="Orndorff P.E."/>
            <person name="Miyamoto D.M."/>
            <person name="Thomson N.R."/>
            <person name="Harris D."/>
            <person name="Goble A."/>
            <person name="Lord A."/>
            <person name="Murphy L."/>
            <person name="Quail M.A."/>
            <person name="Rutter S."/>
            <person name="Squares R."/>
            <person name="Squares S."/>
            <person name="Woodward J."/>
            <person name="Parkhill J."/>
            <person name="Temple L.M."/>
        </authorList>
    </citation>
    <scope>NUCLEOTIDE SEQUENCE [LARGE SCALE GENOMIC DNA]</scope>
    <source>
        <strain>197N</strain>
    </source>
</reference>
<dbReference type="EMBL" id="AM167904">
    <property type="protein sequence ID" value="CAJ49345.1"/>
    <property type="molecule type" value="Genomic_DNA"/>
</dbReference>
<dbReference type="RefSeq" id="WP_012417406.1">
    <property type="nucleotide sequence ID" value="NC_010645.1"/>
</dbReference>
<dbReference type="SMR" id="Q2L159"/>
<dbReference type="STRING" id="360910.BAV1737"/>
<dbReference type="KEGG" id="bav:BAV1737"/>
<dbReference type="eggNOG" id="COG0233">
    <property type="taxonomic scope" value="Bacteria"/>
</dbReference>
<dbReference type="HOGENOM" id="CLU_073981_2_0_4"/>
<dbReference type="OrthoDB" id="9804006at2"/>
<dbReference type="Proteomes" id="UP000001977">
    <property type="component" value="Chromosome"/>
</dbReference>
<dbReference type="GO" id="GO:0005829">
    <property type="term" value="C:cytosol"/>
    <property type="evidence" value="ECO:0007669"/>
    <property type="project" value="GOC"/>
</dbReference>
<dbReference type="GO" id="GO:0043023">
    <property type="term" value="F:ribosomal large subunit binding"/>
    <property type="evidence" value="ECO:0007669"/>
    <property type="project" value="TreeGrafter"/>
</dbReference>
<dbReference type="GO" id="GO:0002184">
    <property type="term" value="P:cytoplasmic translational termination"/>
    <property type="evidence" value="ECO:0007669"/>
    <property type="project" value="TreeGrafter"/>
</dbReference>
<dbReference type="CDD" id="cd00520">
    <property type="entry name" value="RRF"/>
    <property type="match status" value="1"/>
</dbReference>
<dbReference type="FunFam" id="1.10.132.20:FF:000001">
    <property type="entry name" value="Ribosome-recycling factor"/>
    <property type="match status" value="1"/>
</dbReference>
<dbReference type="FunFam" id="3.30.1360.40:FF:000001">
    <property type="entry name" value="Ribosome-recycling factor"/>
    <property type="match status" value="1"/>
</dbReference>
<dbReference type="Gene3D" id="3.30.1360.40">
    <property type="match status" value="1"/>
</dbReference>
<dbReference type="Gene3D" id="1.10.132.20">
    <property type="entry name" value="Ribosome-recycling factor"/>
    <property type="match status" value="1"/>
</dbReference>
<dbReference type="HAMAP" id="MF_00040">
    <property type="entry name" value="RRF"/>
    <property type="match status" value="1"/>
</dbReference>
<dbReference type="InterPro" id="IPR002661">
    <property type="entry name" value="Ribosome_recyc_fac"/>
</dbReference>
<dbReference type="InterPro" id="IPR023584">
    <property type="entry name" value="Ribosome_recyc_fac_dom"/>
</dbReference>
<dbReference type="InterPro" id="IPR036191">
    <property type="entry name" value="RRF_sf"/>
</dbReference>
<dbReference type="NCBIfam" id="TIGR00496">
    <property type="entry name" value="frr"/>
    <property type="match status" value="1"/>
</dbReference>
<dbReference type="PANTHER" id="PTHR20982:SF3">
    <property type="entry name" value="MITOCHONDRIAL RIBOSOME RECYCLING FACTOR PSEUDO 1"/>
    <property type="match status" value="1"/>
</dbReference>
<dbReference type="PANTHER" id="PTHR20982">
    <property type="entry name" value="RIBOSOME RECYCLING FACTOR"/>
    <property type="match status" value="1"/>
</dbReference>
<dbReference type="Pfam" id="PF01765">
    <property type="entry name" value="RRF"/>
    <property type="match status" value="1"/>
</dbReference>
<dbReference type="SUPFAM" id="SSF55194">
    <property type="entry name" value="Ribosome recycling factor, RRF"/>
    <property type="match status" value="1"/>
</dbReference>
<feature type="chain" id="PRO_1000003110" description="Ribosome-recycling factor">
    <location>
        <begin position="1"/>
        <end position="186"/>
    </location>
</feature>
<gene>
    <name evidence="1" type="primary">frr</name>
    <name type="ordered locus">BAV1737</name>
</gene>